<feature type="chain" id="PRO_0000128466" description="Small ribosomal subunit protein uS17">
    <location>
        <begin position="1"/>
        <end position="85"/>
    </location>
</feature>
<reference key="1">
    <citation type="journal article" date="1987" name="Mol. Gen. Genet.">
        <title>The ribosomal protein gene cluster of Mycoplasma capricolum.</title>
        <authorList>
            <person name="Ohkubo S."/>
            <person name="Muto A."/>
            <person name="Kawauchi Y."/>
            <person name="Yamao F."/>
            <person name="Osawa S."/>
        </authorList>
    </citation>
    <scope>NUCLEOTIDE SEQUENCE [GENOMIC DNA]</scope>
</reference>
<reference key="2">
    <citation type="submission" date="2005-09" db="EMBL/GenBank/DDBJ databases">
        <authorList>
            <person name="Glass J.I."/>
            <person name="Lartigue C."/>
            <person name="Pfannkoch C."/>
            <person name="Baden-Tillson H."/>
            <person name="Smith H.O."/>
            <person name="Venter J.C."/>
            <person name="Roske K."/>
            <person name="Wise K.S."/>
            <person name="Calcutt M.J."/>
            <person name="Nelson W.C."/>
            <person name="Nierman W.C."/>
        </authorList>
    </citation>
    <scope>NUCLEOTIDE SEQUENCE [LARGE SCALE GENOMIC DNA]</scope>
    <source>
        <strain>California kid / ATCC 27343 / NCTC 10154</strain>
    </source>
</reference>
<gene>
    <name evidence="1" type="primary">rpsQ</name>
    <name type="ordered locus">MCAP_0687</name>
</gene>
<name>RS17_MYCCT</name>
<organism>
    <name type="scientific">Mycoplasma capricolum subsp. capricolum (strain California kid / ATCC 27343 / NCTC 10154)</name>
    <dbReference type="NCBI Taxonomy" id="340047"/>
    <lineage>
        <taxon>Bacteria</taxon>
        <taxon>Bacillati</taxon>
        <taxon>Mycoplasmatota</taxon>
        <taxon>Mollicutes</taxon>
        <taxon>Mycoplasmataceae</taxon>
        <taxon>Mycoplasma</taxon>
    </lineage>
</organism>
<sequence length="85" mass="10051">MQRNSRRVLIGKVVSDKMDKTITVLVETYKNHPIYKKRVKYSKKYKAHDENQVAQMGDKVEIMETRPLSKTKNFRLVRVIEKATL</sequence>
<proteinExistence type="inferred from homology"/>
<protein>
    <recommendedName>
        <fullName evidence="1">Small ribosomal subunit protein uS17</fullName>
    </recommendedName>
    <alternativeName>
        <fullName evidence="2">30S ribosomal protein S17</fullName>
    </alternativeName>
</protein>
<accession>P10131</accession>
<accession>Q2SRG2</accession>
<keyword id="KW-0687">Ribonucleoprotein</keyword>
<keyword id="KW-0689">Ribosomal protein</keyword>
<keyword id="KW-0694">RNA-binding</keyword>
<keyword id="KW-0699">rRNA-binding</keyword>
<dbReference type="EMBL" id="X06414">
    <property type="protein sequence ID" value="CAA29713.1"/>
    <property type="molecule type" value="Genomic_DNA"/>
</dbReference>
<dbReference type="EMBL" id="CP000123">
    <property type="protein sequence ID" value="ABC01204.1"/>
    <property type="molecule type" value="Genomic_DNA"/>
</dbReference>
<dbReference type="PIR" id="S02840">
    <property type="entry name" value="R3YM17"/>
</dbReference>
<dbReference type="SMR" id="P10131"/>
<dbReference type="KEGG" id="mcp:MCAP_0687"/>
<dbReference type="HOGENOM" id="CLU_073626_1_0_14"/>
<dbReference type="PhylomeDB" id="P10131"/>
<dbReference type="Proteomes" id="UP000001928">
    <property type="component" value="Chromosome"/>
</dbReference>
<dbReference type="GO" id="GO:0022627">
    <property type="term" value="C:cytosolic small ribosomal subunit"/>
    <property type="evidence" value="ECO:0007669"/>
    <property type="project" value="TreeGrafter"/>
</dbReference>
<dbReference type="GO" id="GO:0019843">
    <property type="term" value="F:rRNA binding"/>
    <property type="evidence" value="ECO:0007669"/>
    <property type="project" value="UniProtKB-UniRule"/>
</dbReference>
<dbReference type="GO" id="GO:0003735">
    <property type="term" value="F:structural constituent of ribosome"/>
    <property type="evidence" value="ECO:0007669"/>
    <property type="project" value="InterPro"/>
</dbReference>
<dbReference type="GO" id="GO:0006412">
    <property type="term" value="P:translation"/>
    <property type="evidence" value="ECO:0007669"/>
    <property type="project" value="UniProtKB-UniRule"/>
</dbReference>
<dbReference type="CDD" id="cd00364">
    <property type="entry name" value="Ribosomal_uS17"/>
    <property type="match status" value="1"/>
</dbReference>
<dbReference type="FunFam" id="2.40.50.140:FF:000026">
    <property type="entry name" value="30S ribosomal protein S17"/>
    <property type="match status" value="1"/>
</dbReference>
<dbReference type="Gene3D" id="2.40.50.140">
    <property type="entry name" value="Nucleic acid-binding proteins"/>
    <property type="match status" value="1"/>
</dbReference>
<dbReference type="HAMAP" id="MF_01345_B">
    <property type="entry name" value="Ribosomal_uS17_B"/>
    <property type="match status" value="1"/>
</dbReference>
<dbReference type="InterPro" id="IPR012340">
    <property type="entry name" value="NA-bd_OB-fold"/>
</dbReference>
<dbReference type="InterPro" id="IPR000266">
    <property type="entry name" value="Ribosomal_uS17"/>
</dbReference>
<dbReference type="InterPro" id="IPR019984">
    <property type="entry name" value="Ribosomal_uS17_bact/chlr"/>
</dbReference>
<dbReference type="InterPro" id="IPR019979">
    <property type="entry name" value="Ribosomal_uS17_CS"/>
</dbReference>
<dbReference type="NCBIfam" id="NF004123">
    <property type="entry name" value="PRK05610.1"/>
    <property type="match status" value="1"/>
</dbReference>
<dbReference type="NCBIfam" id="TIGR03635">
    <property type="entry name" value="uS17_bact"/>
    <property type="match status" value="1"/>
</dbReference>
<dbReference type="PANTHER" id="PTHR10744">
    <property type="entry name" value="40S RIBOSOMAL PROTEIN S11 FAMILY MEMBER"/>
    <property type="match status" value="1"/>
</dbReference>
<dbReference type="PANTHER" id="PTHR10744:SF1">
    <property type="entry name" value="SMALL RIBOSOMAL SUBUNIT PROTEIN US17M"/>
    <property type="match status" value="1"/>
</dbReference>
<dbReference type="Pfam" id="PF00366">
    <property type="entry name" value="Ribosomal_S17"/>
    <property type="match status" value="1"/>
</dbReference>
<dbReference type="PRINTS" id="PR00973">
    <property type="entry name" value="RIBOSOMALS17"/>
</dbReference>
<dbReference type="SUPFAM" id="SSF50249">
    <property type="entry name" value="Nucleic acid-binding proteins"/>
    <property type="match status" value="1"/>
</dbReference>
<dbReference type="PROSITE" id="PS00056">
    <property type="entry name" value="RIBOSOMAL_S17"/>
    <property type="match status" value="1"/>
</dbReference>
<evidence type="ECO:0000255" key="1">
    <source>
        <dbReference type="HAMAP-Rule" id="MF_01345"/>
    </source>
</evidence>
<evidence type="ECO:0000305" key="2"/>
<comment type="function">
    <text evidence="1">One of the primary rRNA binding proteins, it binds specifically to the 5'-end of 16S ribosomal RNA.</text>
</comment>
<comment type="subunit">
    <text evidence="1">Part of the 30S ribosomal subunit.</text>
</comment>
<comment type="similarity">
    <text evidence="1">Belongs to the universal ribosomal protein uS17 family.</text>
</comment>